<reference key="1">
    <citation type="journal article" date="2005" name="Science">
        <title>Life at depth: Photobacterium profundum genome sequence and expression analysis.</title>
        <authorList>
            <person name="Vezzi A."/>
            <person name="Campanaro S."/>
            <person name="D'Angelo M."/>
            <person name="Simonato F."/>
            <person name="Vitulo N."/>
            <person name="Lauro F.M."/>
            <person name="Cestaro A."/>
            <person name="Malacrida G."/>
            <person name="Simionati B."/>
            <person name="Cannata N."/>
            <person name="Romualdi C."/>
            <person name="Bartlett D.H."/>
            <person name="Valle G."/>
        </authorList>
    </citation>
    <scope>NUCLEOTIDE SEQUENCE [LARGE SCALE GENOMIC DNA]</scope>
    <source>
        <strain>ATCC BAA-1253 / SS9</strain>
    </source>
</reference>
<dbReference type="EC" id="7.5.2.6" evidence="1"/>
<dbReference type="EMBL" id="CR378670">
    <property type="protein sequence ID" value="CAG20770.1"/>
    <property type="molecule type" value="Genomic_DNA"/>
</dbReference>
<dbReference type="RefSeq" id="WP_011219054.1">
    <property type="nucleotide sequence ID" value="NC_006370.1"/>
</dbReference>
<dbReference type="SMR" id="Q6LPK6"/>
<dbReference type="STRING" id="298386.PBPRA2385"/>
<dbReference type="KEGG" id="ppr:PBPRA2385"/>
<dbReference type="eggNOG" id="COG1132">
    <property type="taxonomic scope" value="Bacteria"/>
</dbReference>
<dbReference type="HOGENOM" id="CLU_000604_84_3_6"/>
<dbReference type="Proteomes" id="UP000000593">
    <property type="component" value="Chromosome 1"/>
</dbReference>
<dbReference type="GO" id="GO:0005886">
    <property type="term" value="C:plasma membrane"/>
    <property type="evidence" value="ECO:0007669"/>
    <property type="project" value="UniProtKB-SubCell"/>
</dbReference>
<dbReference type="GO" id="GO:0015421">
    <property type="term" value="F:ABC-type oligopeptide transporter activity"/>
    <property type="evidence" value="ECO:0007669"/>
    <property type="project" value="TreeGrafter"/>
</dbReference>
<dbReference type="GO" id="GO:0005524">
    <property type="term" value="F:ATP binding"/>
    <property type="evidence" value="ECO:0007669"/>
    <property type="project" value="UniProtKB-KW"/>
</dbReference>
<dbReference type="GO" id="GO:0016887">
    <property type="term" value="F:ATP hydrolysis activity"/>
    <property type="evidence" value="ECO:0007669"/>
    <property type="project" value="InterPro"/>
</dbReference>
<dbReference type="GO" id="GO:0034040">
    <property type="term" value="F:ATPase-coupled lipid transmembrane transporter activity"/>
    <property type="evidence" value="ECO:0007669"/>
    <property type="project" value="InterPro"/>
</dbReference>
<dbReference type="CDD" id="cd18552">
    <property type="entry name" value="ABC_6TM_MsbA_like"/>
    <property type="match status" value="1"/>
</dbReference>
<dbReference type="CDD" id="cd03251">
    <property type="entry name" value="ABCC_MsbA"/>
    <property type="match status" value="1"/>
</dbReference>
<dbReference type="FunFam" id="3.40.50.300:FF:000140">
    <property type="entry name" value="Lipid A export ATP-binding/permease protein MsbA"/>
    <property type="match status" value="1"/>
</dbReference>
<dbReference type="Gene3D" id="1.20.1560.10">
    <property type="entry name" value="ABC transporter type 1, transmembrane domain"/>
    <property type="match status" value="1"/>
</dbReference>
<dbReference type="Gene3D" id="3.40.50.300">
    <property type="entry name" value="P-loop containing nucleotide triphosphate hydrolases"/>
    <property type="match status" value="1"/>
</dbReference>
<dbReference type="InterPro" id="IPR003593">
    <property type="entry name" value="AAA+_ATPase"/>
</dbReference>
<dbReference type="InterPro" id="IPR011527">
    <property type="entry name" value="ABC1_TM_dom"/>
</dbReference>
<dbReference type="InterPro" id="IPR036640">
    <property type="entry name" value="ABC1_TM_sf"/>
</dbReference>
<dbReference type="InterPro" id="IPR003439">
    <property type="entry name" value="ABC_transporter-like_ATP-bd"/>
</dbReference>
<dbReference type="InterPro" id="IPR017871">
    <property type="entry name" value="ABC_transporter-like_CS"/>
</dbReference>
<dbReference type="InterPro" id="IPR011917">
    <property type="entry name" value="ABC_transpr_lipidA"/>
</dbReference>
<dbReference type="InterPro" id="IPR027417">
    <property type="entry name" value="P-loop_NTPase"/>
</dbReference>
<dbReference type="InterPro" id="IPR039421">
    <property type="entry name" value="Type_1_exporter"/>
</dbReference>
<dbReference type="NCBIfam" id="TIGR02203">
    <property type="entry name" value="MsbA_lipidA"/>
    <property type="match status" value="1"/>
</dbReference>
<dbReference type="NCBIfam" id="NF008381">
    <property type="entry name" value="PRK11176.1"/>
    <property type="match status" value="1"/>
</dbReference>
<dbReference type="PANTHER" id="PTHR43394:SF1">
    <property type="entry name" value="ATP-BINDING CASSETTE SUB-FAMILY B MEMBER 10, MITOCHONDRIAL"/>
    <property type="match status" value="1"/>
</dbReference>
<dbReference type="PANTHER" id="PTHR43394">
    <property type="entry name" value="ATP-DEPENDENT PERMEASE MDL1, MITOCHONDRIAL"/>
    <property type="match status" value="1"/>
</dbReference>
<dbReference type="Pfam" id="PF00664">
    <property type="entry name" value="ABC_membrane"/>
    <property type="match status" value="1"/>
</dbReference>
<dbReference type="Pfam" id="PF00005">
    <property type="entry name" value="ABC_tran"/>
    <property type="match status" value="1"/>
</dbReference>
<dbReference type="SMART" id="SM00382">
    <property type="entry name" value="AAA"/>
    <property type="match status" value="1"/>
</dbReference>
<dbReference type="SUPFAM" id="SSF90123">
    <property type="entry name" value="ABC transporter transmembrane region"/>
    <property type="match status" value="1"/>
</dbReference>
<dbReference type="SUPFAM" id="SSF52540">
    <property type="entry name" value="P-loop containing nucleoside triphosphate hydrolases"/>
    <property type="match status" value="1"/>
</dbReference>
<dbReference type="PROSITE" id="PS50929">
    <property type="entry name" value="ABC_TM1F"/>
    <property type="match status" value="1"/>
</dbReference>
<dbReference type="PROSITE" id="PS00211">
    <property type="entry name" value="ABC_TRANSPORTER_1"/>
    <property type="match status" value="1"/>
</dbReference>
<dbReference type="PROSITE" id="PS50893">
    <property type="entry name" value="ABC_TRANSPORTER_2"/>
    <property type="match status" value="1"/>
</dbReference>
<dbReference type="PROSITE" id="PS51239">
    <property type="entry name" value="MSBA"/>
    <property type="match status" value="1"/>
</dbReference>
<name>MSBA_PHOPR</name>
<gene>
    <name evidence="1" type="primary">msbA</name>
    <name type="ordered locus">PBPRA2385</name>
</gene>
<protein>
    <recommendedName>
        <fullName evidence="1">ATP-dependent lipid A-core flippase</fullName>
        <ecNumber evidence="1">7.5.2.6</ecNumber>
    </recommendedName>
    <alternativeName>
        <fullName evidence="1">Lipid A export ATP-binding/permease protein MsbA</fullName>
    </alternativeName>
</protein>
<keyword id="KW-0067">ATP-binding</keyword>
<keyword id="KW-0997">Cell inner membrane</keyword>
<keyword id="KW-1003">Cell membrane</keyword>
<keyword id="KW-0445">Lipid transport</keyword>
<keyword id="KW-0472">Membrane</keyword>
<keyword id="KW-0547">Nucleotide-binding</keyword>
<keyword id="KW-1185">Reference proteome</keyword>
<keyword id="KW-1278">Translocase</keyword>
<keyword id="KW-0812">Transmembrane</keyword>
<keyword id="KW-1133">Transmembrane helix</keyword>
<keyword id="KW-0813">Transport</keyword>
<comment type="function">
    <text evidence="1">Involved in lipopolysaccharide (LPS) biosynthesis. Translocates lipid A-core from the inner to the outer leaflet of the inner membrane. Transmembrane domains (TMD) form a pore in the inner membrane and the ATP-binding domain (NBD) is responsible for energy generation.</text>
</comment>
<comment type="catalytic activity">
    <reaction evidence="1">
        <text>ATP + H2O + lipid A-core oligosaccharideSide 1 = ADP + phosphate + lipid A-core oligosaccharideSide 2.</text>
        <dbReference type="EC" id="7.5.2.6"/>
    </reaction>
</comment>
<comment type="subunit">
    <text evidence="1">Homodimer.</text>
</comment>
<comment type="subcellular location">
    <subcellularLocation>
        <location evidence="1">Cell inner membrane</location>
        <topology evidence="1">Multi-pass membrane protein</topology>
    </subcellularLocation>
</comment>
<comment type="domain">
    <text evidence="1">In MsbA the ATP-binding domain (NBD) and the transmembrane domain (TMD) are fused.</text>
</comment>
<comment type="similarity">
    <text evidence="1">Belongs to the ABC transporter superfamily. Lipid exporter (TC 3.A.1.106) family.</text>
</comment>
<evidence type="ECO:0000255" key="1">
    <source>
        <dbReference type="HAMAP-Rule" id="MF_01703"/>
    </source>
</evidence>
<sequence length="585" mass="64024">MTQSTEQSTLDTYKRLWPYISFYKAGLSVAVVALIINALGDTLMLSMIKPLLDESFGGLDNIESDFLSMMPYYLVGLMILRGASGFVSTYCLSWVSGKVVMNLRRGLFNHFMKMPVSFFDKESSGALLSRITYDSEQVASATSSALVSMVREGASIIGLMALMFWNSWQLSAILLVIAPVVAFSIRLVSKRFRKISKNMQDAMGSVTSSAEQMLKGHKVVLSYGGQEVEKQRFDSVSNNMRQQTMKLVSAQAIANPVIQVIASFALVVVLVLANSEALRAELTPGTFAVVFGAMFGLMRPLKALTNVTSQFQRGMAACQTLFELMDLEAEEDNGKHKIARVNGDIQVKNVTFTYPTKDTPALRNVSFDLPAGKTLALVGRSGSGKSTIANLLTRFYDIDSGELILDGREVKDYQLSNLRDQVAVVSQNVHLFNDTIANNIAYASGDSFSRADIEKAAELAYAMDFIKGMPKGLDTMIGENGVSLSGGQRQRLAIARALLRNAPVLILDEATSALDTESERAIQSALEELQKDRTVLVIAHRLSTIEGADQILVVDDGEIIERGTHGELIKHDGAYAQLHRIQFGD</sequence>
<organism>
    <name type="scientific">Photobacterium profundum (strain SS9)</name>
    <dbReference type="NCBI Taxonomy" id="298386"/>
    <lineage>
        <taxon>Bacteria</taxon>
        <taxon>Pseudomonadati</taxon>
        <taxon>Pseudomonadota</taxon>
        <taxon>Gammaproteobacteria</taxon>
        <taxon>Vibrionales</taxon>
        <taxon>Vibrionaceae</taxon>
        <taxon>Photobacterium</taxon>
    </lineage>
</organism>
<accession>Q6LPK6</accession>
<feature type="chain" id="PRO_0000271636" description="ATP-dependent lipid A-core flippase">
    <location>
        <begin position="1"/>
        <end position="585"/>
    </location>
</feature>
<feature type="transmembrane region" description="Helical" evidence="1">
    <location>
        <begin position="16"/>
        <end position="36"/>
    </location>
</feature>
<feature type="transmembrane region" description="Helical" evidence="1">
    <location>
        <begin position="66"/>
        <end position="86"/>
    </location>
</feature>
<feature type="transmembrane region" description="Helical" evidence="1">
    <location>
        <begin position="156"/>
        <end position="176"/>
    </location>
</feature>
<feature type="transmembrane region" description="Helical" evidence="1">
    <location>
        <begin position="252"/>
        <end position="272"/>
    </location>
</feature>
<feature type="transmembrane region" description="Helical" evidence="1">
    <location>
        <begin position="278"/>
        <end position="298"/>
    </location>
</feature>
<feature type="domain" description="ABC transmembrane type-1" evidence="1">
    <location>
        <begin position="29"/>
        <end position="313"/>
    </location>
</feature>
<feature type="domain" description="ABC transporter" evidence="1">
    <location>
        <begin position="345"/>
        <end position="581"/>
    </location>
</feature>
<feature type="binding site" evidence="1">
    <location>
        <begin position="379"/>
        <end position="386"/>
    </location>
    <ligand>
        <name>ATP</name>
        <dbReference type="ChEBI" id="CHEBI:30616"/>
    </ligand>
</feature>
<proteinExistence type="inferred from homology"/>